<evidence type="ECO:0000255" key="1">
    <source>
        <dbReference type="HAMAP-Rule" id="MF_01323"/>
    </source>
</evidence>
<feature type="chain" id="PRO_0000353477" description="DNA-directed RNA polymerase subunit beta'">
    <location>
        <begin position="1"/>
        <end position="685"/>
    </location>
</feature>
<feature type="binding site" evidence="1">
    <location>
        <position position="69"/>
    </location>
    <ligand>
        <name>Zn(2+)</name>
        <dbReference type="ChEBI" id="CHEBI:29105"/>
    </ligand>
</feature>
<feature type="binding site" evidence="1">
    <location>
        <position position="71"/>
    </location>
    <ligand>
        <name>Zn(2+)</name>
        <dbReference type="ChEBI" id="CHEBI:29105"/>
    </ligand>
</feature>
<feature type="binding site" evidence="1">
    <location>
        <position position="87"/>
    </location>
    <ligand>
        <name>Zn(2+)</name>
        <dbReference type="ChEBI" id="CHEBI:29105"/>
    </ligand>
</feature>
<feature type="binding site" evidence="1">
    <location>
        <position position="90"/>
    </location>
    <ligand>
        <name>Zn(2+)</name>
        <dbReference type="ChEBI" id="CHEBI:29105"/>
    </ligand>
</feature>
<feature type="binding site" evidence="1">
    <location>
        <position position="489"/>
    </location>
    <ligand>
        <name>Mg(2+)</name>
        <dbReference type="ChEBI" id="CHEBI:18420"/>
    </ligand>
</feature>
<feature type="binding site" evidence="1">
    <location>
        <position position="491"/>
    </location>
    <ligand>
        <name>Mg(2+)</name>
        <dbReference type="ChEBI" id="CHEBI:18420"/>
    </ligand>
</feature>
<feature type="binding site" evidence="1">
    <location>
        <position position="493"/>
    </location>
    <ligand>
        <name>Mg(2+)</name>
        <dbReference type="ChEBI" id="CHEBI:18420"/>
    </ligand>
</feature>
<proteinExistence type="inferred from homology"/>
<protein>
    <recommendedName>
        <fullName evidence="1">DNA-directed RNA polymerase subunit beta'</fullName>
        <ecNumber evidence="1">2.7.7.6</ecNumber>
    </recommendedName>
    <alternativeName>
        <fullName evidence="1">PEP</fullName>
    </alternativeName>
    <alternativeName>
        <fullName evidence="1">Plastid-encoded RNA polymerase subunit beta'</fullName>
        <shortName evidence="1">RNA polymerase subunit beta'</shortName>
    </alternativeName>
</protein>
<gene>
    <name evidence="1" type="primary">rpoC1</name>
</gene>
<dbReference type="EC" id="2.7.7.6" evidence="1"/>
<dbReference type="EMBL" id="EF380351">
    <property type="protein sequence ID" value="ABQ45240.1"/>
    <property type="molecule type" value="Genomic_DNA"/>
</dbReference>
<dbReference type="RefSeq" id="YP_001294175.1">
    <property type="nucleotide sequence ID" value="NC_009599.1"/>
</dbReference>
<dbReference type="SMR" id="A6MM27"/>
<dbReference type="GeneID" id="5236943"/>
<dbReference type="GO" id="GO:0009507">
    <property type="term" value="C:chloroplast"/>
    <property type="evidence" value="ECO:0007669"/>
    <property type="project" value="UniProtKB-SubCell"/>
</dbReference>
<dbReference type="GO" id="GO:0000428">
    <property type="term" value="C:DNA-directed RNA polymerase complex"/>
    <property type="evidence" value="ECO:0007669"/>
    <property type="project" value="UniProtKB-KW"/>
</dbReference>
<dbReference type="GO" id="GO:0005739">
    <property type="term" value="C:mitochondrion"/>
    <property type="evidence" value="ECO:0007669"/>
    <property type="project" value="GOC"/>
</dbReference>
<dbReference type="GO" id="GO:0003677">
    <property type="term" value="F:DNA binding"/>
    <property type="evidence" value="ECO:0007669"/>
    <property type="project" value="UniProtKB-UniRule"/>
</dbReference>
<dbReference type="GO" id="GO:0003899">
    <property type="term" value="F:DNA-directed RNA polymerase activity"/>
    <property type="evidence" value="ECO:0007669"/>
    <property type="project" value="UniProtKB-UniRule"/>
</dbReference>
<dbReference type="GO" id="GO:0000287">
    <property type="term" value="F:magnesium ion binding"/>
    <property type="evidence" value="ECO:0007669"/>
    <property type="project" value="UniProtKB-UniRule"/>
</dbReference>
<dbReference type="GO" id="GO:0008270">
    <property type="term" value="F:zinc ion binding"/>
    <property type="evidence" value="ECO:0007669"/>
    <property type="project" value="UniProtKB-UniRule"/>
</dbReference>
<dbReference type="GO" id="GO:0006351">
    <property type="term" value="P:DNA-templated transcription"/>
    <property type="evidence" value="ECO:0007669"/>
    <property type="project" value="UniProtKB-UniRule"/>
</dbReference>
<dbReference type="FunFam" id="1.10.40.90:FF:000002">
    <property type="entry name" value="DNA-directed RNA polymerase subunit"/>
    <property type="match status" value="1"/>
</dbReference>
<dbReference type="FunFam" id="4.10.860.120:FF:000007">
    <property type="entry name" value="DNA-directed RNA polymerase subunit gamma"/>
    <property type="match status" value="1"/>
</dbReference>
<dbReference type="Gene3D" id="1.10.40.90">
    <property type="match status" value="1"/>
</dbReference>
<dbReference type="Gene3D" id="2.40.40.20">
    <property type="match status" value="1"/>
</dbReference>
<dbReference type="Gene3D" id="4.10.860.120">
    <property type="entry name" value="RNA polymerase II, clamp domain"/>
    <property type="match status" value="1"/>
</dbReference>
<dbReference type="Gene3D" id="1.10.274.100">
    <property type="entry name" value="RNA polymerase Rpb1, domain 3"/>
    <property type="match status" value="1"/>
</dbReference>
<dbReference type="HAMAP" id="MF_01323">
    <property type="entry name" value="RNApol_bact_RpoC1"/>
    <property type="match status" value="1"/>
</dbReference>
<dbReference type="InterPro" id="IPR045867">
    <property type="entry name" value="DNA-dir_RpoC_beta_prime"/>
</dbReference>
<dbReference type="InterPro" id="IPR000722">
    <property type="entry name" value="RNA_pol_asu"/>
</dbReference>
<dbReference type="InterPro" id="IPR006592">
    <property type="entry name" value="RNA_pol_N"/>
</dbReference>
<dbReference type="InterPro" id="IPR007080">
    <property type="entry name" value="RNA_pol_Rpb1_1"/>
</dbReference>
<dbReference type="InterPro" id="IPR042102">
    <property type="entry name" value="RNA_pol_Rpb1_3_sf"/>
</dbReference>
<dbReference type="InterPro" id="IPR044893">
    <property type="entry name" value="RNA_pol_Rpb1_clamp_domain"/>
</dbReference>
<dbReference type="InterPro" id="IPR034678">
    <property type="entry name" value="RNApol_RpoC1"/>
</dbReference>
<dbReference type="PANTHER" id="PTHR19376">
    <property type="entry name" value="DNA-DIRECTED RNA POLYMERASE"/>
    <property type="match status" value="1"/>
</dbReference>
<dbReference type="PANTHER" id="PTHR19376:SF54">
    <property type="entry name" value="DNA-DIRECTED RNA POLYMERASE SUBUNIT BETA"/>
    <property type="match status" value="1"/>
</dbReference>
<dbReference type="Pfam" id="PF04997">
    <property type="entry name" value="RNA_pol_Rpb1_1"/>
    <property type="match status" value="2"/>
</dbReference>
<dbReference type="Pfam" id="PF00623">
    <property type="entry name" value="RNA_pol_Rpb1_2"/>
    <property type="match status" value="2"/>
</dbReference>
<dbReference type="SMART" id="SM00663">
    <property type="entry name" value="RPOLA_N"/>
    <property type="match status" value="1"/>
</dbReference>
<dbReference type="SUPFAM" id="SSF64484">
    <property type="entry name" value="beta and beta-prime subunits of DNA dependent RNA-polymerase"/>
    <property type="match status" value="1"/>
</dbReference>
<comment type="function">
    <text evidence="1">DNA-dependent RNA polymerase catalyzes the transcription of DNA into RNA using the four ribonucleoside triphosphates as substrates.</text>
</comment>
<comment type="catalytic activity">
    <reaction evidence="1">
        <text>RNA(n) + a ribonucleoside 5'-triphosphate = RNA(n+1) + diphosphate</text>
        <dbReference type="Rhea" id="RHEA:21248"/>
        <dbReference type="Rhea" id="RHEA-COMP:14527"/>
        <dbReference type="Rhea" id="RHEA-COMP:17342"/>
        <dbReference type="ChEBI" id="CHEBI:33019"/>
        <dbReference type="ChEBI" id="CHEBI:61557"/>
        <dbReference type="ChEBI" id="CHEBI:140395"/>
        <dbReference type="EC" id="2.7.7.6"/>
    </reaction>
</comment>
<comment type="cofactor">
    <cofactor evidence="1">
        <name>Mg(2+)</name>
        <dbReference type="ChEBI" id="CHEBI:18420"/>
    </cofactor>
    <text evidence="1">Binds 1 Mg(2+) ion per subunit.</text>
</comment>
<comment type="cofactor">
    <cofactor evidence="1">
        <name>Zn(2+)</name>
        <dbReference type="ChEBI" id="CHEBI:29105"/>
    </cofactor>
    <text evidence="1">Binds 1 Zn(2+) ion per subunit.</text>
</comment>
<comment type="subunit">
    <text evidence="1">In plastids the minimal PEP RNA polymerase catalytic core is composed of four subunits: alpha, beta, beta', and beta''. When a (nuclear-encoded) sigma factor is associated with the core the holoenzyme is formed, which can initiate transcription.</text>
</comment>
<comment type="subcellular location">
    <subcellularLocation>
        <location evidence="1">Plastid</location>
        <location evidence="1">Chloroplast</location>
    </subcellularLocation>
</comment>
<comment type="similarity">
    <text evidence="1">Belongs to the RNA polymerase beta' chain family. RpoC1 subfamily.</text>
</comment>
<geneLocation type="chloroplast"/>
<sequence length="685" mass="78948">MIDRYKHQQLRIGLVSPQQISAWANKILPNGEIVGEVTKPYTFHYKTNKPERDGLFCERIFGPIKSGICACGNYRVIGDEKEDPKFCEQCGVEFVDSRIRRYQMGYIKLACPVTHVWYLKRIPSYIANLLDKPLKELEGLVYCDFSFARPVAKKPTFLRLRGSFEYEIQSRKYSIPLFFTTQGFDTFRNREISTGAGAIREQLADPDLRIITDYSLGEWKELGEEGPTGNEWEDRKIGRRKDFLVRRMELAKHFIRTKVEPERMVLCLLPVLPPELRPIIQIDGGKSMSSDINELYRRVIYRNNTLIDLLTTSRSTPRELVMCQEKLVQEAVDTLLDNGIRGQPMRDGHNKVYKSFSDVIEGKEGRFRETLLGKRVDYSGRSVIVVGPSLSLHRCGLPREIAIELFQTFVIRGLIRQHVASNIGVAKSKIREKEPIVWEILQEVMQGHPVLLNRAPTLHRLGIQAFQPILVEGRAICLHPLVCKGFNADFDGDQMAVHVPLSLEAQAEARLLMFSHMNLLSPAIGDPISVPTQDMLIGLYVLTSGNRRGICANRYNPCNRGNRVNFQNERIDDNNYKYTKEKDPYFCSSYDAIGAYRQKRINLDSPLWLRWRLDQRIIASREVPIEVHYESLGTYHEIYVNYLIVKSVKKEILCIYIRTTVGHIYFYRKIEEAVQGFFRACSYGT</sequence>
<organism>
    <name type="scientific">Buxus microphylla</name>
    <name type="common">Littleleaf boxwood</name>
    <name type="synonym">Japanese boxwood</name>
    <dbReference type="NCBI Taxonomy" id="153571"/>
    <lineage>
        <taxon>Eukaryota</taxon>
        <taxon>Viridiplantae</taxon>
        <taxon>Streptophyta</taxon>
        <taxon>Embryophyta</taxon>
        <taxon>Tracheophyta</taxon>
        <taxon>Spermatophyta</taxon>
        <taxon>Magnoliopsida</taxon>
        <taxon>Buxales</taxon>
        <taxon>Buxaceae</taxon>
        <taxon>Buxus</taxon>
    </lineage>
</organism>
<name>RPOC1_BUXMI</name>
<accession>A6MM27</accession>
<keyword id="KW-0150">Chloroplast</keyword>
<keyword id="KW-0240">DNA-directed RNA polymerase</keyword>
<keyword id="KW-0460">Magnesium</keyword>
<keyword id="KW-0479">Metal-binding</keyword>
<keyword id="KW-0548">Nucleotidyltransferase</keyword>
<keyword id="KW-0934">Plastid</keyword>
<keyword id="KW-0804">Transcription</keyword>
<keyword id="KW-0808">Transferase</keyword>
<keyword id="KW-0862">Zinc</keyword>
<reference key="1">
    <citation type="journal article" date="2007" name="Mol. Phylogenet. Evol.">
        <title>Phylogenetic and evolutionary implications of complete chloroplast genome sequences of four early-diverging angiosperms: Buxus (Buxaceae), Chloranthus (Chloranthaceae), Dioscorea (Dioscoreaceae), and Illicium (Schisandraceae).</title>
        <authorList>
            <person name="Hansen D.R."/>
            <person name="Dastidar S.G."/>
            <person name="Cai Z."/>
            <person name="Penaflor C."/>
            <person name="Kuehl J.V."/>
            <person name="Boore J.L."/>
            <person name="Jansen R.K."/>
        </authorList>
    </citation>
    <scope>NUCLEOTIDE SEQUENCE [LARGE SCALE GENOMIC DNA]</scope>
</reference>